<proteinExistence type="evidence at transcript level"/>
<organism>
    <name type="scientific">Antheraea polyphemus</name>
    <name type="common">Polyphemus moth</name>
    <dbReference type="NCBI Taxonomy" id="7120"/>
    <lineage>
        <taxon>Eukaryota</taxon>
        <taxon>Metazoa</taxon>
        <taxon>Ecdysozoa</taxon>
        <taxon>Arthropoda</taxon>
        <taxon>Hexapoda</taxon>
        <taxon>Insecta</taxon>
        <taxon>Pterygota</taxon>
        <taxon>Neoptera</taxon>
        <taxon>Endopterygota</taxon>
        <taxon>Lepidoptera</taxon>
        <taxon>Glossata</taxon>
        <taxon>Ditrysia</taxon>
        <taxon>Bombycoidea</taxon>
        <taxon>Saturniidae</taxon>
        <taxon>Saturniinae</taxon>
        <taxon>Saturniini</taxon>
        <taxon>Antheraea</taxon>
    </lineage>
</organism>
<feature type="signal peptide">
    <location>
        <begin position="1" status="less than"/>
        <end position="18"/>
    </location>
</feature>
<feature type="chain" id="PRO_0000005382" description="Chorion class B protein PC401">
    <location>
        <begin position="19"/>
        <end position="171"/>
    </location>
</feature>
<feature type="region of interest" description="Left arm">
    <location>
        <begin position="19"/>
        <end position="61"/>
    </location>
</feature>
<feature type="region of interest" description="Central domain">
    <location>
        <begin position="62"/>
        <end position="132"/>
    </location>
</feature>
<feature type="region of interest" description="Right arm (Gly-rich tandem repeats)">
    <location>
        <begin position="133"/>
        <end position="171"/>
    </location>
</feature>
<feature type="non-terminal residue">
    <location>
        <position position="1"/>
    </location>
</feature>
<keyword id="KW-0677">Repeat</keyword>
<keyword id="KW-0732">Signal</keyword>
<protein>
    <recommendedName>
        <fullName>Chorion class B protein PC401</fullName>
    </recommendedName>
</protein>
<reference key="1">
    <citation type="journal article" date="1979" name="Cell">
        <title>Evolution of two major chorion multigene families as inferred from cloned cDNA and protein sequences.</title>
        <authorList>
            <person name="Jones C.W."/>
            <person name="Rosenthal N."/>
            <person name="Rodakis G.C."/>
            <person name="Kafatos F.C."/>
        </authorList>
    </citation>
    <scope>NUCLEOTIDE SEQUENCE [MRNA]</scope>
</reference>
<dbReference type="EMBL" id="V00077">
    <property type="protein sequence ID" value="CAA23419.1"/>
    <property type="molecule type" value="mRNA"/>
</dbReference>
<dbReference type="PIR" id="A03337">
    <property type="entry name" value="JBAO41"/>
</dbReference>
<dbReference type="GO" id="GO:0042600">
    <property type="term" value="C:egg chorion"/>
    <property type="evidence" value="ECO:0007669"/>
    <property type="project" value="InterPro"/>
</dbReference>
<dbReference type="GO" id="GO:0005213">
    <property type="term" value="F:structural constituent of egg chorion"/>
    <property type="evidence" value="ECO:0007669"/>
    <property type="project" value="InterPro"/>
</dbReference>
<dbReference type="GO" id="GO:0007304">
    <property type="term" value="P:chorion-containing eggshell formation"/>
    <property type="evidence" value="ECO:0007669"/>
    <property type="project" value="InterPro"/>
</dbReference>
<dbReference type="InterPro" id="IPR002635">
    <property type="entry name" value="Chorion"/>
</dbReference>
<dbReference type="Pfam" id="PF01723">
    <property type="entry name" value="Chorion_1"/>
    <property type="match status" value="1"/>
</dbReference>
<accession>P02847</accession>
<sequence>TKSILILPSALMIQSAVGQCLGRWGPGLGRCGGCGGCDGWGGRLGYGAGIGEIGLGCGLEASYGGGLGVASASAVPPVGLGVASENMYEGCVGVAGNLPFLGTAGVEGVFPTAGAGVINYGCGDGAVGITSEGGYGGLGYGGLGYEGVGGYGLGYGGYGLGGCGCGCGRYL</sequence>
<evidence type="ECO:0000305" key="1"/>
<comment type="function">
    <text>This protein is one of many from the eggshell of the silk moth.</text>
</comment>
<comment type="similarity">
    <text evidence="1">Belongs to the chorion protein family.</text>
</comment>
<name>CHB4_ANTPO</name>